<sequence length="354" mass="40523">MTIFNGLSESGESKKLNSKIEKQIENASKKDKKIYKVLLLGASDSGKSTISKQIKILNKNGFSQEEIMTFIPVIRRNLLESAKTLVKIIVQKGINLDPLGTHNCEIIEKFNPTPGELINANIGQAITSLWSANSVRSCTYGNDSVLIDSAPYFFSRADEICSRHYVPTIDDILRSRNSTLGISEISFTLDHLQIRMFDVGGQRTERRKWIYCFENVNSIIFCVSLNDYDKKLYERAAPERNRLVESISLFDSIINSQWFMHSSIILFLNKFDLFRKKLEHVPFQDYFPQYEGKNSVKSITRYILWLFVNPSINRAKHNIYPHITTAVDTSNIKVVFSAVKETILQHSLKEAGMF</sequence>
<comment type="function">
    <text evidence="3 5 6">Alpha subunit of the heterotrimeric guanine nucleotide-binding protein (G protein) involved in glucose-induced cAMP signaling (PubMed:15831585). Binds to its cognate transmembrane receptor git3, which senses extracellular glucose, and activates cAMP-PKA signaling to repress sexual development and gluconeogenesis (PubMed:11238401, PubMed:15831585, PubMed:20139237).</text>
</comment>
<comment type="cofactor">
    <cofactor evidence="1">
        <name>Mg(2+)</name>
        <dbReference type="ChEBI" id="CHEBI:18420"/>
    </cofactor>
</comment>
<comment type="subunit">
    <text evidence="3 5 6">G proteins are composed of 3 units; alpha, beta and gamma (PubMed:11238401). Binding of the beta-gamma subunit complex (git5-git11) to the alpha subunit (gpa2) facilitates interaction with GPCR git3 (PubMed:11238401). Interacts with GPCR git3; the interaction is direct and leads to activation of gpa2 upon glucose stimulation (PubMed:20139237). Interacts with adenylate cyclase cyr1 (via N-terminus); the interaction is direct and serves to activate adenylate cyclase and cAMP-PKA signaling, to repress sexual development and gluconeogenesis (PubMed:15831585).</text>
</comment>
<comment type="subcellular location">
    <subcellularLocation>
        <location evidence="8">Cell membrane</location>
        <topology evidence="8">Peripheral membrane protein</topology>
        <orientation evidence="8">Cytoplasmic side</orientation>
    </subcellularLocation>
</comment>
<comment type="disruption phenotype">
    <text evidence="3">Leads to starvation-independent sexual development; the effect is suppressed by cAMP.</text>
</comment>
<comment type="similarity">
    <text evidence="7">Belongs to the G-alpha family.</text>
</comment>
<name>GPA2_SCHPO</name>
<proteinExistence type="evidence at protein level"/>
<protein>
    <recommendedName>
        <fullName>Guanine nucleotide-binding protein alpha-2 subunit</fullName>
    </recommendedName>
    <alternativeName>
        <fullName>GP2-alpha</fullName>
    </alternativeName>
</protein>
<accession>Q04665</accession>
<gene>
    <name evidence="9" type="primary">gpa2</name>
    <name evidence="9" type="synonym">git8</name>
    <name evidence="9" type="ORF">SPAC23H3.13c</name>
</gene>
<evidence type="ECO:0000250" key="1">
    <source>
        <dbReference type="UniProtKB" id="P18064"/>
    </source>
</evidence>
<evidence type="ECO:0000255" key="2">
    <source>
        <dbReference type="PROSITE-ProRule" id="PRU01230"/>
    </source>
</evidence>
<evidence type="ECO:0000269" key="3">
    <source>
    </source>
</evidence>
<evidence type="ECO:0000269" key="4">
    <source>
    </source>
</evidence>
<evidence type="ECO:0000269" key="5">
    <source>
    </source>
</evidence>
<evidence type="ECO:0000269" key="6">
    <source>
    </source>
</evidence>
<evidence type="ECO:0000305" key="7"/>
<evidence type="ECO:0000305" key="8">
    <source>
    </source>
</evidence>
<evidence type="ECO:0000312" key="9">
    <source>
        <dbReference type="PomBase" id="SPAC23H3.13c"/>
    </source>
</evidence>
<feature type="chain" id="PRO_0000203609" description="Guanine nucleotide-binding protein alpha-2 subunit">
    <location>
        <begin position="1"/>
        <end position="354"/>
    </location>
</feature>
<feature type="domain" description="G-alpha" evidence="2">
    <location>
        <begin position="33"/>
        <end position="354"/>
    </location>
</feature>
<feature type="region of interest" description="G1 motif" evidence="2">
    <location>
        <begin position="36"/>
        <end position="49"/>
    </location>
</feature>
<feature type="region of interest" description="G2 motif" evidence="2">
    <location>
        <begin position="171"/>
        <end position="179"/>
    </location>
</feature>
<feature type="region of interest" description="G3 motif" evidence="2">
    <location>
        <begin position="194"/>
        <end position="203"/>
    </location>
</feature>
<feature type="region of interest" description="G4 motif" evidence="2">
    <location>
        <begin position="265"/>
        <end position="272"/>
    </location>
</feature>
<feature type="region of interest" description="G5 motif" evidence="2">
    <location>
        <begin position="324"/>
        <end position="329"/>
    </location>
</feature>
<feature type="binding site" evidence="1">
    <location>
        <position position="44"/>
    </location>
    <ligand>
        <name>GTP</name>
        <dbReference type="ChEBI" id="CHEBI:37565"/>
    </ligand>
</feature>
<feature type="binding site" evidence="1">
    <location>
        <position position="45"/>
    </location>
    <ligand>
        <name>GTP</name>
        <dbReference type="ChEBI" id="CHEBI:37565"/>
    </ligand>
</feature>
<feature type="binding site" evidence="1">
    <location>
        <position position="46"/>
    </location>
    <ligand>
        <name>GTP</name>
        <dbReference type="ChEBI" id="CHEBI:37565"/>
    </ligand>
</feature>
<feature type="binding site" evidence="1">
    <location>
        <position position="47"/>
    </location>
    <ligand>
        <name>GTP</name>
        <dbReference type="ChEBI" id="CHEBI:37565"/>
    </ligand>
</feature>
<feature type="binding site" evidence="1">
    <location>
        <position position="48"/>
    </location>
    <ligand>
        <name>GTP</name>
        <dbReference type="ChEBI" id="CHEBI:37565"/>
    </ligand>
</feature>
<feature type="binding site" evidence="1">
    <location>
        <position position="48"/>
    </location>
    <ligand>
        <name>Mg(2+)</name>
        <dbReference type="ChEBI" id="CHEBI:18420"/>
    </ligand>
</feature>
<feature type="binding site" evidence="1">
    <location>
        <position position="49"/>
    </location>
    <ligand>
        <name>GTP</name>
        <dbReference type="ChEBI" id="CHEBI:37565"/>
    </ligand>
</feature>
<feature type="binding site" evidence="1">
    <location>
        <position position="148"/>
    </location>
    <ligand>
        <name>GTP</name>
        <dbReference type="ChEBI" id="CHEBI:37565"/>
    </ligand>
</feature>
<feature type="binding site" evidence="1">
    <location>
        <position position="173"/>
    </location>
    <ligand>
        <name>GTP</name>
        <dbReference type="ChEBI" id="CHEBI:37565"/>
    </ligand>
</feature>
<feature type="binding site" evidence="1">
    <location>
        <position position="179"/>
    </location>
    <ligand>
        <name>GTP</name>
        <dbReference type="ChEBI" id="CHEBI:37565"/>
    </ligand>
</feature>
<feature type="binding site" evidence="1">
    <location>
        <position position="179"/>
    </location>
    <ligand>
        <name>Mg(2+)</name>
        <dbReference type="ChEBI" id="CHEBI:18420"/>
    </ligand>
</feature>
<feature type="binding site" evidence="1">
    <location>
        <position position="201"/>
    </location>
    <ligand>
        <name>GTP</name>
        <dbReference type="ChEBI" id="CHEBI:37565"/>
    </ligand>
</feature>
<feature type="binding site" evidence="1">
    <location>
        <position position="269"/>
    </location>
    <ligand>
        <name>GTP</name>
        <dbReference type="ChEBI" id="CHEBI:37565"/>
    </ligand>
</feature>
<feature type="binding site" evidence="1">
    <location>
        <position position="270"/>
    </location>
    <ligand>
        <name>GTP</name>
        <dbReference type="ChEBI" id="CHEBI:37565"/>
    </ligand>
</feature>
<feature type="binding site" evidence="1">
    <location>
        <position position="272"/>
    </location>
    <ligand>
        <name>GTP</name>
        <dbReference type="ChEBI" id="CHEBI:37565"/>
    </ligand>
</feature>
<feature type="binding site" evidence="1">
    <location>
        <position position="326"/>
    </location>
    <ligand>
        <name>GTP</name>
        <dbReference type="ChEBI" id="CHEBI:37565"/>
    </ligand>
</feature>
<feature type="mutagenesis site" description="Constitutive activity." evidence="6">
    <original>T</original>
    <variation>A</variation>
    <location>
        <position position="49"/>
    </location>
</feature>
<feature type="mutagenesis site" description="Constitutive activity." evidence="6">
    <original>I</original>
    <variation>S</variation>
    <location>
        <position position="56"/>
    </location>
</feature>
<feature type="mutagenesis site" description="Constitutive activity; enhances the GDP-GTP exchange rate." evidence="6">
    <original>L</original>
    <variation>P</variation>
    <location>
        <position position="57"/>
    </location>
</feature>
<feature type="mutagenesis site" description="Constitutive activity." evidence="6">
    <original>F</original>
    <variation>S</variation>
    <location>
        <position position="62"/>
    </location>
</feature>
<feature type="mutagenesis site" description="Constitutive activity." evidence="6">
    <original>S</original>
    <variation>F</variation>
    <location>
        <position position="81"/>
    </location>
</feature>
<feature type="mutagenesis site" description="Constitutive activity; enhances the GDP-GTP exchange rate." evidence="6">
    <original>V</original>
    <variation>A</variation>
    <location>
        <position position="90"/>
    </location>
</feature>
<feature type="mutagenesis site" description="Constitutive activity." evidence="6">
    <original>S</original>
    <variation>F</variation>
    <location>
        <position position="149"/>
    </location>
</feature>
<feature type="mutagenesis site" description="Constitutive activity. Increases affinity for adenylate cyclase cyr1. Decrease in mating and sporulation efficiency." evidence="4 5 6">
    <original>R</original>
    <variation>H</variation>
    <location>
        <position position="176"/>
    </location>
</feature>
<feature type="mutagenesis site" description="Constitutive activity." evidence="6">
    <original>E</original>
    <variation>D</variation>
    <location>
        <position position="184"/>
    </location>
</feature>
<feature type="mutagenesis site" description="Decrease in mating and sporulation efficiency." evidence="4">
    <original>Q</original>
    <variation>L</variation>
    <location>
        <position position="202"/>
    </location>
</feature>
<feature type="mutagenesis site" description="Constitutive activity." evidence="6">
    <original>K</original>
    <variation>E</variation>
    <variation>N</variation>
    <location>
        <position position="270"/>
    </location>
</feature>
<feature type="mutagenesis site" description="Enhances the GDP-GTP exchange rate." evidence="6">
    <original>K</original>
    <variation>E</variation>
    <location>
        <position position="270"/>
    </location>
</feature>
<feature type="mutagenesis site" description="Constitutive activity." evidence="6">
    <original>T</original>
    <variation>A</variation>
    <location>
        <position position="325"/>
    </location>
</feature>
<feature type="mutagenesis site" description="Constitutive activity." evidence="6">
    <original>V</original>
    <variation>A</variation>
    <location>
        <position position="327"/>
    </location>
</feature>
<reference key="1">
    <citation type="journal article" date="1992" name="Genes Dev.">
        <title>Characterization of a fission yeast gene, gpa2, that encodes a G alpha subunit involved in the monitoring of nutrition.</title>
        <authorList>
            <person name="Isshiki T."/>
            <person name="Mochizuki N."/>
            <person name="Maeda T."/>
            <person name="Yamamoto M."/>
        </authorList>
    </citation>
    <scope>NUCLEOTIDE SEQUENCE [GENOMIC DNA]</scope>
    <scope>MUTAGENESIS OF ARG-176 AND GLN-202</scope>
</reference>
<reference key="2">
    <citation type="journal article" date="2002" name="Nature">
        <title>The genome sequence of Schizosaccharomyces pombe.</title>
        <authorList>
            <person name="Wood V."/>
            <person name="Gwilliam R."/>
            <person name="Rajandream M.A."/>
            <person name="Lyne M.H."/>
            <person name="Lyne R."/>
            <person name="Stewart A."/>
            <person name="Sgouros J.G."/>
            <person name="Peat N."/>
            <person name="Hayles J."/>
            <person name="Baker S.G."/>
            <person name="Basham D."/>
            <person name="Bowman S."/>
            <person name="Brooks K."/>
            <person name="Brown D."/>
            <person name="Brown S."/>
            <person name="Chillingworth T."/>
            <person name="Churcher C.M."/>
            <person name="Collins M."/>
            <person name="Connor R."/>
            <person name="Cronin A."/>
            <person name="Davis P."/>
            <person name="Feltwell T."/>
            <person name="Fraser A."/>
            <person name="Gentles S."/>
            <person name="Goble A."/>
            <person name="Hamlin N."/>
            <person name="Harris D.E."/>
            <person name="Hidalgo J."/>
            <person name="Hodgson G."/>
            <person name="Holroyd S."/>
            <person name="Hornsby T."/>
            <person name="Howarth S."/>
            <person name="Huckle E.J."/>
            <person name="Hunt S."/>
            <person name="Jagels K."/>
            <person name="James K.D."/>
            <person name="Jones L."/>
            <person name="Jones M."/>
            <person name="Leather S."/>
            <person name="McDonald S."/>
            <person name="McLean J."/>
            <person name="Mooney P."/>
            <person name="Moule S."/>
            <person name="Mungall K.L."/>
            <person name="Murphy L.D."/>
            <person name="Niblett D."/>
            <person name="Odell C."/>
            <person name="Oliver K."/>
            <person name="O'Neil S."/>
            <person name="Pearson D."/>
            <person name="Quail M.A."/>
            <person name="Rabbinowitsch E."/>
            <person name="Rutherford K.M."/>
            <person name="Rutter S."/>
            <person name="Saunders D."/>
            <person name="Seeger K."/>
            <person name="Sharp S."/>
            <person name="Skelton J."/>
            <person name="Simmonds M.N."/>
            <person name="Squares R."/>
            <person name="Squares S."/>
            <person name="Stevens K."/>
            <person name="Taylor K."/>
            <person name="Taylor R.G."/>
            <person name="Tivey A."/>
            <person name="Walsh S.V."/>
            <person name="Warren T."/>
            <person name="Whitehead S."/>
            <person name="Woodward J.R."/>
            <person name="Volckaert G."/>
            <person name="Aert R."/>
            <person name="Robben J."/>
            <person name="Grymonprez B."/>
            <person name="Weltjens I."/>
            <person name="Vanstreels E."/>
            <person name="Rieger M."/>
            <person name="Schaefer M."/>
            <person name="Mueller-Auer S."/>
            <person name="Gabel C."/>
            <person name="Fuchs M."/>
            <person name="Duesterhoeft A."/>
            <person name="Fritzc C."/>
            <person name="Holzer E."/>
            <person name="Moestl D."/>
            <person name="Hilbert H."/>
            <person name="Borzym K."/>
            <person name="Langer I."/>
            <person name="Beck A."/>
            <person name="Lehrach H."/>
            <person name="Reinhardt R."/>
            <person name="Pohl T.M."/>
            <person name="Eger P."/>
            <person name="Zimmermann W."/>
            <person name="Wedler H."/>
            <person name="Wambutt R."/>
            <person name="Purnelle B."/>
            <person name="Goffeau A."/>
            <person name="Cadieu E."/>
            <person name="Dreano S."/>
            <person name="Gloux S."/>
            <person name="Lelaure V."/>
            <person name="Mottier S."/>
            <person name="Galibert F."/>
            <person name="Aves S.J."/>
            <person name="Xiang Z."/>
            <person name="Hunt C."/>
            <person name="Moore K."/>
            <person name="Hurst S.M."/>
            <person name="Lucas M."/>
            <person name="Rochet M."/>
            <person name="Gaillardin C."/>
            <person name="Tallada V.A."/>
            <person name="Garzon A."/>
            <person name="Thode G."/>
            <person name="Daga R.R."/>
            <person name="Cruzado L."/>
            <person name="Jimenez J."/>
            <person name="Sanchez M."/>
            <person name="del Rey F."/>
            <person name="Benito J."/>
            <person name="Dominguez A."/>
            <person name="Revuelta J.L."/>
            <person name="Moreno S."/>
            <person name="Armstrong J."/>
            <person name="Forsburg S.L."/>
            <person name="Cerutti L."/>
            <person name="Lowe T."/>
            <person name="McCombie W.R."/>
            <person name="Paulsen I."/>
            <person name="Potashkin J."/>
            <person name="Shpakovski G.V."/>
            <person name="Ussery D."/>
            <person name="Barrell B.G."/>
            <person name="Nurse P."/>
        </authorList>
    </citation>
    <scope>NUCLEOTIDE SEQUENCE [LARGE SCALE GENOMIC DNA]</scope>
    <source>
        <strain>972 / ATCC 24843</strain>
    </source>
</reference>
<reference key="3">
    <citation type="journal article" date="2001" name="Genetics">
        <title>The git5 Gbeta and git11 Ggamma form an atypical Gbetagamma dimer acting in the fission yeast glucose/cAMP pathway.</title>
        <authorList>
            <person name="Landry S."/>
            <person name="Hoffman C.S."/>
        </authorList>
    </citation>
    <scope>FUNCTION</scope>
    <scope>SUBUNIT</scope>
    <scope>DISRUPTION PHENOTYPE</scope>
</reference>
<reference key="4">
    <citation type="journal article" date="2005" name="Proc. Natl. Acad. Sci. U.S.A.">
        <title>Direct activation of fission yeast adenylate cyclase by the Gpa2 Galpha of the glucose signaling pathway.</title>
        <authorList>
            <person name="Ivey F.D."/>
            <person name="Hoffman C.S."/>
        </authorList>
    </citation>
    <scope>FUNCTION</scope>
    <scope>INTERACTION WITH CYR1</scope>
    <scope>MUTAGENESIS OF ARG-176</scope>
</reference>
<reference key="5">
    <citation type="journal article" date="2010" name="Eukaryot. Cell">
        <title>Activated alleles of the Schizosaccharomyces pombe gpa2+ Galpha gene identify residues involved in GDP-GTP exchange.</title>
        <authorList>
            <person name="Ivey F.D."/>
            <person name="Taglia F.X."/>
            <person name="Yang F."/>
            <person name="Lander M.M."/>
            <person name="Kelly D.A."/>
            <person name="Hoffman C.S."/>
        </authorList>
    </citation>
    <scope>FUNCTION</scope>
    <scope>INTERACTION WITH GIT3</scope>
    <scope>SUBCELLULAR LOCATION</scope>
    <scope>MUTAGENESIS OF THR-49; ILE-56; LEU-57; PHE-62; SER-81; VAL-90; SER-149; ARG-176; GLU-184; LYS-270; THR-325 AND VAL-327</scope>
</reference>
<organism>
    <name type="scientific">Schizosaccharomyces pombe (strain 972 / ATCC 24843)</name>
    <name type="common">Fission yeast</name>
    <dbReference type="NCBI Taxonomy" id="284812"/>
    <lineage>
        <taxon>Eukaryota</taxon>
        <taxon>Fungi</taxon>
        <taxon>Dikarya</taxon>
        <taxon>Ascomycota</taxon>
        <taxon>Taphrinomycotina</taxon>
        <taxon>Schizosaccharomycetes</taxon>
        <taxon>Schizosaccharomycetales</taxon>
        <taxon>Schizosaccharomycetaceae</taxon>
        <taxon>Schizosaccharomyces</taxon>
    </lineage>
</organism>
<dbReference type="EMBL" id="D13366">
    <property type="protein sequence ID" value="BAA02630.1"/>
    <property type="molecule type" value="Genomic_DNA"/>
</dbReference>
<dbReference type="EMBL" id="CU329670">
    <property type="protein sequence ID" value="CAB16244.1"/>
    <property type="molecule type" value="Genomic_DNA"/>
</dbReference>
<dbReference type="PIR" id="A46393">
    <property type="entry name" value="A46393"/>
</dbReference>
<dbReference type="PIR" id="T38306">
    <property type="entry name" value="T38306"/>
</dbReference>
<dbReference type="RefSeq" id="NP_593803.1">
    <property type="nucleotide sequence ID" value="NM_001019232.2"/>
</dbReference>
<dbReference type="SMR" id="Q04665"/>
<dbReference type="BioGRID" id="278214">
    <property type="interactions" value="86"/>
</dbReference>
<dbReference type="FunCoup" id="Q04665">
    <property type="interactions" value="168"/>
</dbReference>
<dbReference type="STRING" id="284812.Q04665"/>
<dbReference type="PaxDb" id="4896-SPAC23H3.13c.1"/>
<dbReference type="EnsemblFungi" id="SPAC23H3.13c.1">
    <property type="protein sequence ID" value="SPAC23H3.13c.1:pep"/>
    <property type="gene ID" value="SPAC23H3.13c"/>
</dbReference>
<dbReference type="GeneID" id="2541720"/>
<dbReference type="KEGG" id="spo:2541720"/>
<dbReference type="PomBase" id="SPAC23H3.13c">
    <property type="gene designation" value="gpa2"/>
</dbReference>
<dbReference type="VEuPathDB" id="FungiDB:SPAC23H3.13c"/>
<dbReference type="eggNOG" id="KOG0082">
    <property type="taxonomic scope" value="Eukaryota"/>
</dbReference>
<dbReference type="HOGENOM" id="CLU_014184_0_1_1"/>
<dbReference type="InParanoid" id="Q04665"/>
<dbReference type="OMA" id="FMAIQAM"/>
<dbReference type="PhylomeDB" id="Q04665"/>
<dbReference type="Reactome" id="R-SPO-2514859">
    <property type="pathway name" value="Inactivation, recovery and regulation of the phototransduction cascade"/>
</dbReference>
<dbReference type="Reactome" id="R-SPO-418594">
    <property type="pathway name" value="G alpha (i) signalling events"/>
</dbReference>
<dbReference type="Reactome" id="R-SPO-418597">
    <property type="pathway name" value="G alpha (z) signalling events"/>
</dbReference>
<dbReference type="PRO" id="PR:Q04665"/>
<dbReference type="Proteomes" id="UP000002485">
    <property type="component" value="Chromosome I"/>
</dbReference>
<dbReference type="GO" id="GO:0032153">
    <property type="term" value="C:cell division site"/>
    <property type="evidence" value="ECO:0007005"/>
    <property type="project" value="PomBase"/>
</dbReference>
<dbReference type="GO" id="GO:0005737">
    <property type="term" value="C:cytoplasm"/>
    <property type="evidence" value="ECO:0000318"/>
    <property type="project" value="GO_Central"/>
</dbReference>
<dbReference type="GO" id="GO:0005829">
    <property type="term" value="C:cytosol"/>
    <property type="evidence" value="ECO:0007005"/>
    <property type="project" value="PomBase"/>
</dbReference>
<dbReference type="GO" id="GO:0005834">
    <property type="term" value="C:heterotrimeric G-protein complex"/>
    <property type="evidence" value="ECO:0000314"/>
    <property type="project" value="PomBase"/>
</dbReference>
<dbReference type="GO" id="GO:0044732">
    <property type="term" value="C:mitotic spindle pole body"/>
    <property type="evidence" value="ECO:0007005"/>
    <property type="project" value="PomBase"/>
</dbReference>
<dbReference type="GO" id="GO:0005634">
    <property type="term" value="C:nucleus"/>
    <property type="evidence" value="ECO:0007005"/>
    <property type="project" value="PomBase"/>
</dbReference>
<dbReference type="GO" id="GO:0010856">
    <property type="term" value="F:adenylate cyclase activator activity"/>
    <property type="evidence" value="ECO:0000314"/>
    <property type="project" value="PomBase"/>
</dbReference>
<dbReference type="GO" id="GO:0001664">
    <property type="term" value="F:G protein-coupled receptor binding"/>
    <property type="evidence" value="ECO:0000318"/>
    <property type="project" value="GO_Central"/>
</dbReference>
<dbReference type="GO" id="GO:0031683">
    <property type="term" value="F:G-protein beta/gamma-subunit complex binding"/>
    <property type="evidence" value="ECO:0000318"/>
    <property type="project" value="GO_Central"/>
</dbReference>
<dbReference type="GO" id="GO:0005525">
    <property type="term" value="F:GTP binding"/>
    <property type="evidence" value="ECO:0000314"/>
    <property type="project" value="PomBase"/>
</dbReference>
<dbReference type="GO" id="GO:0003924">
    <property type="term" value="F:GTPase activity"/>
    <property type="evidence" value="ECO:0000318"/>
    <property type="project" value="GO_Central"/>
</dbReference>
<dbReference type="GO" id="GO:0046872">
    <property type="term" value="F:metal ion binding"/>
    <property type="evidence" value="ECO:0007669"/>
    <property type="project" value="UniProtKB-KW"/>
</dbReference>
<dbReference type="GO" id="GO:0007189">
    <property type="term" value="P:adenylate cyclase-activating G protein-coupled receptor signaling pathway"/>
    <property type="evidence" value="ECO:0000318"/>
    <property type="project" value="GO_Central"/>
</dbReference>
<dbReference type="GO" id="GO:0010619">
    <property type="term" value="P:adenylate cyclase-activating glucose-activated G protein-coupled receptor signaling pathway"/>
    <property type="evidence" value="ECO:0000315"/>
    <property type="project" value="PomBase"/>
</dbReference>
<dbReference type="GO" id="GO:0010515">
    <property type="term" value="P:negative regulation of induction of conjugation with cellular fusion"/>
    <property type="evidence" value="ECO:0000315"/>
    <property type="project" value="PomBase"/>
</dbReference>
<dbReference type="GO" id="GO:0000122">
    <property type="term" value="P:negative regulation of transcription by RNA polymerase II"/>
    <property type="evidence" value="ECO:0000315"/>
    <property type="project" value="PomBase"/>
</dbReference>
<dbReference type="CDD" id="cd00066">
    <property type="entry name" value="G-alpha"/>
    <property type="match status" value="1"/>
</dbReference>
<dbReference type="FunFam" id="1.10.400.10:FF:000028">
    <property type="entry name" value="Guanine nucleotide-binding protein alpha-5 subunit"/>
    <property type="match status" value="1"/>
</dbReference>
<dbReference type="FunFam" id="3.40.50.300:FF:000181">
    <property type="entry name" value="Guanine nucleotide-binding protein subunit alpha"/>
    <property type="match status" value="1"/>
</dbReference>
<dbReference type="Gene3D" id="1.10.400.10">
    <property type="entry name" value="GI Alpha 1, domain 2-like"/>
    <property type="match status" value="1"/>
</dbReference>
<dbReference type="Gene3D" id="3.40.50.300">
    <property type="entry name" value="P-loop containing nucleotide triphosphate hydrolases"/>
    <property type="match status" value="1"/>
</dbReference>
<dbReference type="InterPro" id="IPR001019">
    <property type="entry name" value="Gprotein_alpha_su"/>
</dbReference>
<dbReference type="InterPro" id="IPR011025">
    <property type="entry name" value="GproteinA_insert"/>
</dbReference>
<dbReference type="InterPro" id="IPR027417">
    <property type="entry name" value="P-loop_NTPase"/>
</dbReference>
<dbReference type="PANTHER" id="PTHR10218">
    <property type="entry name" value="GTP-BINDING PROTEIN ALPHA SUBUNIT"/>
    <property type="match status" value="1"/>
</dbReference>
<dbReference type="PANTHER" id="PTHR10218:SF369">
    <property type="entry name" value="GUANINE NUCLEOTIDE-BINDING PROTEIN ALPHA-2 SUBUNIT"/>
    <property type="match status" value="1"/>
</dbReference>
<dbReference type="Pfam" id="PF00503">
    <property type="entry name" value="G-alpha"/>
    <property type="match status" value="1"/>
</dbReference>
<dbReference type="PRINTS" id="PR00318">
    <property type="entry name" value="GPROTEINA"/>
</dbReference>
<dbReference type="SMART" id="SM00275">
    <property type="entry name" value="G_alpha"/>
    <property type="match status" value="1"/>
</dbReference>
<dbReference type="SUPFAM" id="SSF52540">
    <property type="entry name" value="P-loop containing nucleoside triphosphate hydrolases"/>
    <property type="match status" value="1"/>
</dbReference>
<dbReference type="SUPFAM" id="SSF47895">
    <property type="entry name" value="Transducin (alpha subunit), insertion domain"/>
    <property type="match status" value="1"/>
</dbReference>
<dbReference type="PROSITE" id="PS51882">
    <property type="entry name" value="G_ALPHA"/>
    <property type="match status" value="1"/>
</dbReference>
<keyword id="KW-1003">Cell membrane</keyword>
<keyword id="KW-0342">GTP-binding</keyword>
<keyword id="KW-0378">Hydrolase</keyword>
<keyword id="KW-0460">Magnesium</keyword>
<keyword id="KW-0472">Membrane</keyword>
<keyword id="KW-0479">Metal-binding</keyword>
<keyword id="KW-0547">Nucleotide-binding</keyword>
<keyword id="KW-1185">Reference proteome</keyword>
<keyword id="KW-0807">Transducer</keyword>